<gene>
    <name evidence="1" type="primary">pyrK</name>
    <name type="ordered locus">MA_0584</name>
</gene>
<comment type="function">
    <text evidence="1">Responsible for channeling the electrons from the oxidation of dihydroorotate from the FMN redox center in the PyrD type B subunit to the ultimate electron acceptor NAD(+).</text>
</comment>
<comment type="cofactor">
    <cofactor evidence="1">
        <name>[2Fe-2S] cluster</name>
        <dbReference type="ChEBI" id="CHEBI:190135"/>
    </cofactor>
    <text evidence="1">Binds 1 [2Fe-2S] cluster per subunit.</text>
</comment>
<comment type="cofactor">
    <cofactor evidence="1">
        <name>FAD</name>
        <dbReference type="ChEBI" id="CHEBI:57692"/>
    </cofactor>
    <text evidence="1">Binds 1 FAD per subunit.</text>
</comment>
<comment type="pathway">
    <text evidence="1">Pyrimidine metabolism; UMP biosynthesis via de novo pathway; orotate from (S)-dihydroorotate (NAD(+) route): step 1/1.</text>
</comment>
<comment type="subunit">
    <text evidence="1">Heterotetramer of 2 PyrK and 2 PyrD type B subunits.</text>
</comment>
<comment type="similarity">
    <text evidence="1">Belongs to the PyrK family.</text>
</comment>
<accession>P58886</accession>
<proteinExistence type="inferred from homology"/>
<dbReference type="EMBL" id="AE010299">
    <property type="protein sequence ID" value="AAM04028.1"/>
    <property type="molecule type" value="Genomic_DNA"/>
</dbReference>
<dbReference type="RefSeq" id="WP_011020633.1">
    <property type="nucleotide sequence ID" value="NC_003552.1"/>
</dbReference>
<dbReference type="SMR" id="P58886"/>
<dbReference type="FunCoup" id="P58886">
    <property type="interactions" value="95"/>
</dbReference>
<dbReference type="STRING" id="188937.MA_0584"/>
<dbReference type="EnsemblBacteria" id="AAM04028">
    <property type="protein sequence ID" value="AAM04028"/>
    <property type="gene ID" value="MA_0584"/>
</dbReference>
<dbReference type="GeneID" id="1472476"/>
<dbReference type="KEGG" id="mac:MA_0584"/>
<dbReference type="HOGENOM" id="CLU_003827_1_1_2"/>
<dbReference type="InParanoid" id="P58886"/>
<dbReference type="OrthoDB" id="35401at2157"/>
<dbReference type="PhylomeDB" id="P58886"/>
<dbReference type="UniPathway" id="UPA00070">
    <property type="reaction ID" value="UER00945"/>
</dbReference>
<dbReference type="Proteomes" id="UP000002487">
    <property type="component" value="Chromosome"/>
</dbReference>
<dbReference type="GO" id="GO:0051537">
    <property type="term" value="F:2 iron, 2 sulfur cluster binding"/>
    <property type="evidence" value="ECO:0007669"/>
    <property type="project" value="UniProtKB-KW"/>
</dbReference>
<dbReference type="GO" id="GO:0009055">
    <property type="term" value="F:electron transfer activity"/>
    <property type="evidence" value="ECO:0007669"/>
    <property type="project" value="UniProtKB-UniRule"/>
</dbReference>
<dbReference type="GO" id="GO:0050660">
    <property type="term" value="F:flavin adenine dinucleotide binding"/>
    <property type="evidence" value="ECO:0007669"/>
    <property type="project" value="InterPro"/>
</dbReference>
<dbReference type="GO" id="GO:0046872">
    <property type="term" value="F:metal ion binding"/>
    <property type="evidence" value="ECO:0007669"/>
    <property type="project" value="UniProtKB-KW"/>
</dbReference>
<dbReference type="GO" id="GO:0016491">
    <property type="term" value="F:oxidoreductase activity"/>
    <property type="evidence" value="ECO:0007669"/>
    <property type="project" value="InterPro"/>
</dbReference>
<dbReference type="GO" id="GO:0044205">
    <property type="term" value="P:'de novo' UMP biosynthetic process"/>
    <property type="evidence" value="ECO:0007669"/>
    <property type="project" value="UniProtKB-UniRule"/>
</dbReference>
<dbReference type="CDD" id="cd06220">
    <property type="entry name" value="DHOD_e_trans_like2"/>
    <property type="match status" value="1"/>
</dbReference>
<dbReference type="Gene3D" id="2.10.240.10">
    <property type="entry name" value="Dihydroorotate dehydrogenase, electron transfer subunit"/>
    <property type="match status" value="1"/>
</dbReference>
<dbReference type="Gene3D" id="3.40.50.80">
    <property type="entry name" value="Nucleotide-binding domain of ferredoxin-NADP reductase (FNR) module"/>
    <property type="match status" value="1"/>
</dbReference>
<dbReference type="Gene3D" id="2.40.30.10">
    <property type="entry name" value="Translation factors"/>
    <property type="match status" value="1"/>
</dbReference>
<dbReference type="HAMAP" id="MF_01211">
    <property type="entry name" value="DHODB_Fe_S_bind"/>
    <property type="match status" value="1"/>
</dbReference>
<dbReference type="InterPro" id="IPR012165">
    <property type="entry name" value="Cyt_c3_hydrogenase_gsu"/>
</dbReference>
<dbReference type="InterPro" id="IPR037117">
    <property type="entry name" value="Dihydroorotate_DH_ele_sf"/>
</dbReference>
<dbReference type="InterPro" id="IPR019480">
    <property type="entry name" value="Dihydroorotate_DH_Fe-S-bd"/>
</dbReference>
<dbReference type="InterPro" id="IPR023455">
    <property type="entry name" value="Dihydroorotate_DHASE_ETsu"/>
</dbReference>
<dbReference type="InterPro" id="IPR017927">
    <property type="entry name" value="FAD-bd_FR_type"/>
</dbReference>
<dbReference type="InterPro" id="IPR039261">
    <property type="entry name" value="FNR_nucleotide-bd"/>
</dbReference>
<dbReference type="InterPro" id="IPR001433">
    <property type="entry name" value="OxRdtase_FAD/NAD-bd"/>
</dbReference>
<dbReference type="InterPro" id="IPR050353">
    <property type="entry name" value="PyrK_electron_transfer"/>
</dbReference>
<dbReference type="InterPro" id="IPR017938">
    <property type="entry name" value="Riboflavin_synthase-like_b-brl"/>
</dbReference>
<dbReference type="NCBIfam" id="NF000796">
    <property type="entry name" value="PRK00054.1-1"/>
    <property type="match status" value="1"/>
</dbReference>
<dbReference type="PANTHER" id="PTHR43513">
    <property type="entry name" value="DIHYDROOROTATE DEHYDROGENASE B (NAD(+)), ELECTRON TRANSFER SUBUNIT"/>
    <property type="match status" value="1"/>
</dbReference>
<dbReference type="PANTHER" id="PTHR43513:SF3">
    <property type="entry name" value="DIHYDROOROTATE DEHYDROGENASE B (NAD(+)), ELECTRON TRANSFER SUBUNIT-RELATED"/>
    <property type="match status" value="1"/>
</dbReference>
<dbReference type="Pfam" id="PF10418">
    <property type="entry name" value="DHODB_Fe-S_bind"/>
    <property type="match status" value="1"/>
</dbReference>
<dbReference type="Pfam" id="PF00175">
    <property type="entry name" value="NAD_binding_1"/>
    <property type="match status" value="1"/>
</dbReference>
<dbReference type="PIRSF" id="PIRSF006816">
    <property type="entry name" value="Cyc3_hyd_g"/>
    <property type="match status" value="1"/>
</dbReference>
<dbReference type="SUPFAM" id="SSF52343">
    <property type="entry name" value="Ferredoxin reductase-like, C-terminal NADP-linked domain"/>
    <property type="match status" value="1"/>
</dbReference>
<dbReference type="SUPFAM" id="SSF63380">
    <property type="entry name" value="Riboflavin synthase domain-like"/>
    <property type="match status" value="1"/>
</dbReference>
<dbReference type="PROSITE" id="PS00197">
    <property type="entry name" value="2FE2S_FER_1"/>
    <property type="match status" value="1"/>
</dbReference>
<dbReference type="PROSITE" id="PS51384">
    <property type="entry name" value="FAD_FR"/>
    <property type="match status" value="1"/>
</dbReference>
<name>PYRK_METAC</name>
<keyword id="KW-0001">2Fe-2S</keyword>
<keyword id="KW-0249">Electron transport</keyword>
<keyword id="KW-0274">FAD</keyword>
<keyword id="KW-0285">Flavoprotein</keyword>
<keyword id="KW-0408">Iron</keyword>
<keyword id="KW-0411">Iron-sulfur</keyword>
<keyword id="KW-0479">Metal-binding</keyword>
<keyword id="KW-0665">Pyrimidine biosynthesis</keyword>
<keyword id="KW-1185">Reference proteome</keyword>
<keyword id="KW-0813">Transport</keyword>
<organism>
    <name type="scientific">Methanosarcina acetivorans (strain ATCC 35395 / DSM 2834 / JCM 12185 / C2A)</name>
    <dbReference type="NCBI Taxonomy" id="188937"/>
    <lineage>
        <taxon>Archaea</taxon>
        <taxon>Methanobacteriati</taxon>
        <taxon>Methanobacteriota</taxon>
        <taxon>Stenosarchaea group</taxon>
        <taxon>Methanomicrobia</taxon>
        <taxon>Methanosarcinales</taxon>
        <taxon>Methanosarcinaceae</taxon>
        <taxon>Methanosarcina</taxon>
    </lineage>
</organism>
<sequence length="259" mass="27982">MLPLNVTITQITEESPLVRTFFFDHRFEDMDPGQFVMVWVRGVDEVPMGLSRNNSITVQKVGEATSKLFELKEGDSFGLRGPFGKGFTLPSRGEKVLLIAGGVGAAPLSPYAEAASAAGAEVHTILGARSAGDLLFEWRFEALGDIYASTDDGSKGVKGFVTDVLKGLDVAAYDRIAVCGPEIMMASVFRLLEERKVLEKAEFSLHRYFKCGIGVCGACCIDLSGLRVCKDGPVFSGIQLLGSELGKYSRDASGRRIKI</sequence>
<reference key="1">
    <citation type="journal article" date="2002" name="Genome Res.">
        <title>The genome of Methanosarcina acetivorans reveals extensive metabolic and physiological diversity.</title>
        <authorList>
            <person name="Galagan J.E."/>
            <person name="Nusbaum C."/>
            <person name="Roy A."/>
            <person name="Endrizzi M.G."/>
            <person name="Macdonald P."/>
            <person name="FitzHugh W."/>
            <person name="Calvo S."/>
            <person name="Engels R."/>
            <person name="Smirnov S."/>
            <person name="Atnoor D."/>
            <person name="Brown A."/>
            <person name="Allen N."/>
            <person name="Naylor J."/>
            <person name="Stange-Thomann N."/>
            <person name="DeArellano K."/>
            <person name="Johnson R."/>
            <person name="Linton L."/>
            <person name="McEwan P."/>
            <person name="McKernan K."/>
            <person name="Talamas J."/>
            <person name="Tirrell A."/>
            <person name="Ye W."/>
            <person name="Zimmer A."/>
            <person name="Barber R.D."/>
            <person name="Cann I."/>
            <person name="Graham D.E."/>
            <person name="Grahame D.A."/>
            <person name="Guss A.M."/>
            <person name="Hedderich R."/>
            <person name="Ingram-Smith C."/>
            <person name="Kuettner H.C."/>
            <person name="Krzycki J.A."/>
            <person name="Leigh J.A."/>
            <person name="Li W."/>
            <person name="Liu J."/>
            <person name="Mukhopadhyay B."/>
            <person name="Reeve J.N."/>
            <person name="Smith K."/>
            <person name="Springer T.A."/>
            <person name="Umayam L.A."/>
            <person name="White O."/>
            <person name="White R.H."/>
            <person name="de Macario E.C."/>
            <person name="Ferry J.G."/>
            <person name="Jarrell K.F."/>
            <person name="Jing H."/>
            <person name="Macario A.J.L."/>
            <person name="Paulsen I.T."/>
            <person name="Pritchett M."/>
            <person name="Sowers K.R."/>
            <person name="Swanson R.V."/>
            <person name="Zinder S.H."/>
            <person name="Lander E."/>
            <person name="Metcalf W.W."/>
            <person name="Birren B."/>
        </authorList>
    </citation>
    <scope>NUCLEOTIDE SEQUENCE [LARGE SCALE GENOMIC DNA]</scope>
    <source>
        <strain>ATCC 35395 / DSM 2834 / JCM 12185 / C2A</strain>
    </source>
</reference>
<evidence type="ECO:0000255" key="1">
    <source>
        <dbReference type="HAMAP-Rule" id="MF_01211"/>
    </source>
</evidence>
<feature type="chain" id="PRO_0000148374" description="Probable dihydroorotate dehydrogenase B (NAD(+)), electron transfer subunit">
    <location>
        <begin position="1"/>
        <end position="259"/>
    </location>
</feature>
<feature type="domain" description="FAD-binding FR-type" evidence="1">
    <location>
        <begin position="1"/>
        <end position="89"/>
    </location>
</feature>
<feature type="binding site" evidence="1">
    <location>
        <position position="211"/>
    </location>
    <ligand>
        <name>[2Fe-2S] cluster</name>
        <dbReference type="ChEBI" id="CHEBI:190135"/>
    </ligand>
</feature>
<feature type="binding site" evidence="1">
    <location>
        <position position="216"/>
    </location>
    <ligand>
        <name>[2Fe-2S] cluster</name>
        <dbReference type="ChEBI" id="CHEBI:190135"/>
    </ligand>
</feature>
<feature type="binding site" evidence="1">
    <location>
        <position position="219"/>
    </location>
    <ligand>
        <name>[2Fe-2S] cluster</name>
        <dbReference type="ChEBI" id="CHEBI:190135"/>
    </ligand>
</feature>
<feature type="binding site" evidence="1">
    <location>
        <position position="229"/>
    </location>
    <ligand>
        <name>[2Fe-2S] cluster</name>
        <dbReference type="ChEBI" id="CHEBI:190135"/>
    </ligand>
</feature>
<protein>
    <recommendedName>
        <fullName evidence="1">Probable dihydroorotate dehydrogenase B (NAD(+)), electron transfer subunit</fullName>
    </recommendedName>
    <alternativeName>
        <fullName evidence="1">Dihydroorotate oxidase B, electron transfer subunit</fullName>
    </alternativeName>
</protein>